<protein>
    <recommendedName>
        <fullName>Cytochrome c</fullName>
    </recommendedName>
</protein>
<comment type="function">
    <text>Electron carrier protein. The oxidized form of the cytochrome c heme group can accept an electron from the heme group of the cytochrome c1 subunit of cytochrome reductase. Cytochrome c then transfers this electron to the cytochrome oxidase complex, the final protein carrier in the mitochondrial electron-transport chain.</text>
</comment>
<comment type="subcellular location">
    <subcellularLocation>
        <location>Mitochondrion intermembrane space</location>
    </subcellularLocation>
    <text>Loosely associated with the inner membrane.</text>
</comment>
<comment type="PTM">
    <text>Binds 1 heme c group covalently per subunit.</text>
</comment>
<comment type="similarity">
    <text evidence="3">Belongs to the cytochrome c family.</text>
</comment>
<comment type="caution">
    <text evidence="3">This protein probably does not originate from A.thaliana, rather it resembles fungal cytochrome c.</text>
</comment>
<comment type="online information" name="Protein Spotlight">
    <link uri="https://www.proteinspotlight.org/back_issues/076"/>
    <text>Life shuttle - Issue 76 of November 2006</text>
</comment>
<feature type="chain" id="PRO_0000108284" description="Cytochrome c">
    <location>
        <begin position="1"/>
        <end position="112"/>
    </location>
</feature>
<feature type="binding site" description="covalent" evidence="2">
    <location>
        <position position="23"/>
    </location>
    <ligand>
        <name>heme c</name>
        <dbReference type="ChEBI" id="CHEBI:61717"/>
    </ligand>
</feature>
<feature type="binding site" description="covalent" evidence="2">
    <location>
        <position position="26"/>
    </location>
    <ligand>
        <name>heme c</name>
        <dbReference type="ChEBI" id="CHEBI:61717"/>
    </ligand>
</feature>
<feature type="binding site" description="axial binding residue" evidence="2">
    <location>
        <position position="27"/>
    </location>
    <ligand>
        <name>heme c</name>
        <dbReference type="ChEBI" id="CHEBI:61717"/>
    </ligand>
    <ligandPart>
        <name>Fe</name>
        <dbReference type="ChEBI" id="CHEBI:18248"/>
    </ligandPart>
</feature>
<feature type="binding site" description="axial binding residue" evidence="2">
    <location>
        <position position="89"/>
    </location>
    <ligand>
        <name>heme c</name>
        <dbReference type="ChEBI" id="CHEBI:61717"/>
    </ligand>
    <ligandPart>
        <name>Fe</name>
        <dbReference type="ChEBI" id="CHEBI:18248"/>
    </ligandPart>
</feature>
<feature type="modified residue" description="N6,N6,N6-trimethyllysine" evidence="1">
    <location>
        <position position="81"/>
    </location>
</feature>
<feature type="modified residue" description="N6,N6,N6-trimethyllysine" evidence="1">
    <location>
        <position position="95"/>
    </location>
</feature>
<name>CYC_ARATH</name>
<gene>
    <name type="primary">CC-1</name>
</gene>
<proteinExistence type="inferred from homology"/>
<reference key="1">
    <citation type="journal article" date="1991" name="J. Mol. Evol.">
        <title>Structure and molecular evolutionary analysis of a plant cytochrome c gene: surprising implications for Arabidopsis thaliana.</title>
        <authorList>
            <person name="Kemmerer E.C."/>
            <person name="Lei M."/>
            <person name="Wu R."/>
        </authorList>
    </citation>
    <scope>NUCLEOTIDE SEQUENCE [GENOMIC DNA]</scope>
    <source>
        <strain>cv. Columbia</strain>
    </source>
</reference>
<keyword id="KW-0249">Electron transport</keyword>
<keyword id="KW-0349">Heme</keyword>
<keyword id="KW-0408">Iron</keyword>
<keyword id="KW-0479">Metal-binding</keyword>
<keyword id="KW-0488">Methylation</keyword>
<keyword id="KW-0496">Mitochondrion</keyword>
<keyword id="KW-0679">Respiratory chain</keyword>
<keyword id="KW-0813">Transport</keyword>
<evidence type="ECO:0000250" key="1">
    <source>
        <dbReference type="UniProtKB" id="P62772"/>
    </source>
</evidence>
<evidence type="ECO:0000255" key="2">
    <source>
        <dbReference type="PROSITE-ProRule" id="PRU00433"/>
    </source>
</evidence>
<evidence type="ECO:0000305" key="3"/>
<dbReference type="EMBL" id="X59459">
    <property type="protein sequence ID" value="CAA42069.1"/>
    <property type="molecule type" value="Genomic_DNA"/>
</dbReference>
<dbReference type="EMBL" id="M85253">
    <property type="protein sequence ID" value="AAA32747.1"/>
    <property type="molecule type" value="Genomic_DNA"/>
</dbReference>
<dbReference type="SMR" id="P29380"/>
<dbReference type="ExpressionAtlas" id="P29380">
    <property type="expression patterns" value="baseline and differential"/>
</dbReference>
<dbReference type="GO" id="GO:0005758">
    <property type="term" value="C:mitochondrial intermembrane space"/>
    <property type="evidence" value="ECO:0007669"/>
    <property type="project" value="UniProtKB-SubCell"/>
</dbReference>
<dbReference type="GO" id="GO:0009055">
    <property type="term" value="F:electron transfer activity"/>
    <property type="evidence" value="ECO:0007669"/>
    <property type="project" value="InterPro"/>
</dbReference>
<dbReference type="GO" id="GO:0020037">
    <property type="term" value="F:heme binding"/>
    <property type="evidence" value="ECO:0007669"/>
    <property type="project" value="InterPro"/>
</dbReference>
<dbReference type="GO" id="GO:0046872">
    <property type="term" value="F:metal ion binding"/>
    <property type="evidence" value="ECO:0007669"/>
    <property type="project" value="UniProtKB-KW"/>
</dbReference>
<dbReference type="FunFam" id="1.10.760.10:FF:000001">
    <property type="entry name" value="Cytochrome c iso-1"/>
    <property type="match status" value="1"/>
</dbReference>
<dbReference type="Gene3D" id="1.10.760.10">
    <property type="entry name" value="Cytochrome c-like domain"/>
    <property type="match status" value="1"/>
</dbReference>
<dbReference type="InterPro" id="IPR009056">
    <property type="entry name" value="Cyt_c-like_dom"/>
</dbReference>
<dbReference type="InterPro" id="IPR036909">
    <property type="entry name" value="Cyt_c-like_dom_sf"/>
</dbReference>
<dbReference type="InterPro" id="IPR002327">
    <property type="entry name" value="Cyt_c_1A/1B"/>
</dbReference>
<dbReference type="PANTHER" id="PTHR11961">
    <property type="entry name" value="CYTOCHROME C"/>
    <property type="match status" value="1"/>
</dbReference>
<dbReference type="Pfam" id="PF00034">
    <property type="entry name" value="Cytochrom_C"/>
    <property type="match status" value="1"/>
</dbReference>
<dbReference type="PRINTS" id="PR00604">
    <property type="entry name" value="CYTCHRMECIAB"/>
</dbReference>
<dbReference type="SUPFAM" id="SSF46626">
    <property type="entry name" value="Cytochrome c"/>
    <property type="match status" value="1"/>
</dbReference>
<dbReference type="PROSITE" id="PS51007">
    <property type="entry name" value="CYTC"/>
    <property type="match status" value="1"/>
</dbReference>
<sequence>MQVADISLQGDAKKGANLFKTRCAQCHTLKAGEGNKIGPELHGLFGRKTGSVAGYSYTDANKQKGIEWKDDTLFEYLENPKKYIPGTKMAFGGLKKPKDRNDLITFLEEETK</sequence>
<organism>
    <name type="scientific">Arabidopsis thaliana</name>
    <name type="common">Mouse-ear cress</name>
    <dbReference type="NCBI Taxonomy" id="3702"/>
    <lineage>
        <taxon>Eukaryota</taxon>
        <taxon>Viridiplantae</taxon>
        <taxon>Streptophyta</taxon>
        <taxon>Embryophyta</taxon>
        <taxon>Tracheophyta</taxon>
        <taxon>Spermatophyta</taxon>
        <taxon>Magnoliopsida</taxon>
        <taxon>eudicotyledons</taxon>
        <taxon>Gunneridae</taxon>
        <taxon>Pentapetalae</taxon>
        <taxon>rosids</taxon>
        <taxon>malvids</taxon>
        <taxon>Brassicales</taxon>
        <taxon>Brassicaceae</taxon>
        <taxon>Camelineae</taxon>
        <taxon>Arabidopsis</taxon>
    </lineage>
</organism>
<accession>P29380</accession>